<gene>
    <name evidence="1" type="primary">hslU</name>
    <name type="ordered locus">SBO_3948</name>
</gene>
<sequence length="443" mass="49594">MSEMTPREIVSELDKHIIGQDNAKRSVAIALRNRWRRMQLNEELRHEVTPKNILMIGPTGVGKTEIARRLAKLANAPFIKVEATKFTEVGYVGKEVDSIIRDLTDAAVKMVRVQAIEKNRYRAEELAEERILDVLIPPAKNNWGQTEQQQEPSAARQAFRKKLREGQLDDKEIEIDLAAAPMGVEIMAPPGMEEMTSQLQSMFQNLGGQKQKARKLKIKDAMKLLIEEEAAKLVNPEELKQDAIDAVEQHGIVFIDEIDKICKRGESSGPDVSREGVQRDLLPLVEGCTVSTKHGMVKTDHILFIASGAFQIAKPSDLIPELQGRLPIRVELQALTTSDFERILTEPNASITVQYKALMATEGVNIEFTDSGIKRIAEAAWQVNESTENIGARRLHTVLERLMEEISYDASDLSGQNITIDADYVSKHLDALVADEDLSRFIL</sequence>
<organism>
    <name type="scientific">Shigella boydii serotype 4 (strain Sb227)</name>
    <dbReference type="NCBI Taxonomy" id="300268"/>
    <lineage>
        <taxon>Bacteria</taxon>
        <taxon>Pseudomonadati</taxon>
        <taxon>Pseudomonadota</taxon>
        <taxon>Gammaproteobacteria</taxon>
        <taxon>Enterobacterales</taxon>
        <taxon>Enterobacteriaceae</taxon>
        <taxon>Shigella</taxon>
    </lineage>
</organism>
<name>HSLU_SHIBS</name>
<comment type="function">
    <text evidence="1">ATPase subunit of a proteasome-like degradation complex; this subunit has chaperone activity. The binding of ATP and its subsequent hydrolysis by HslU are essential for unfolding of protein substrates subsequently hydrolyzed by HslV. HslU recognizes the N-terminal part of its protein substrates and unfolds these before they are guided to HslV for hydrolysis.</text>
</comment>
<comment type="subunit">
    <text evidence="1">A double ring-shaped homohexamer of HslV is capped on each side by a ring-shaped HslU homohexamer. The assembly of the HslU/HslV complex is dependent on binding of ATP.</text>
</comment>
<comment type="subcellular location">
    <subcellularLocation>
        <location evidence="1">Cytoplasm</location>
    </subcellularLocation>
</comment>
<comment type="induction">
    <text evidence="1">By heat shock.</text>
</comment>
<comment type="similarity">
    <text evidence="1">Belongs to the ClpX chaperone family. HslU subfamily.</text>
</comment>
<accession>Q31U59</accession>
<proteinExistence type="inferred from homology"/>
<evidence type="ECO:0000255" key="1">
    <source>
        <dbReference type="HAMAP-Rule" id="MF_00249"/>
    </source>
</evidence>
<feature type="chain" id="PRO_1000012810" description="ATP-dependent protease ATPase subunit HslU">
    <location>
        <begin position="1"/>
        <end position="443"/>
    </location>
</feature>
<feature type="binding site" evidence="1">
    <location>
        <position position="18"/>
    </location>
    <ligand>
        <name>ATP</name>
        <dbReference type="ChEBI" id="CHEBI:30616"/>
    </ligand>
</feature>
<feature type="binding site" evidence="1">
    <location>
        <begin position="60"/>
        <end position="65"/>
    </location>
    <ligand>
        <name>ATP</name>
        <dbReference type="ChEBI" id="CHEBI:30616"/>
    </ligand>
</feature>
<feature type="binding site" evidence="1">
    <location>
        <position position="256"/>
    </location>
    <ligand>
        <name>ATP</name>
        <dbReference type="ChEBI" id="CHEBI:30616"/>
    </ligand>
</feature>
<feature type="binding site" evidence="1">
    <location>
        <position position="321"/>
    </location>
    <ligand>
        <name>ATP</name>
        <dbReference type="ChEBI" id="CHEBI:30616"/>
    </ligand>
</feature>
<feature type="binding site" evidence="1">
    <location>
        <position position="393"/>
    </location>
    <ligand>
        <name>ATP</name>
        <dbReference type="ChEBI" id="CHEBI:30616"/>
    </ligand>
</feature>
<protein>
    <recommendedName>
        <fullName evidence="1">ATP-dependent protease ATPase subunit HslU</fullName>
    </recommendedName>
    <alternativeName>
        <fullName evidence="1">Heat shock protein HslU</fullName>
    </alternativeName>
    <alternativeName>
        <fullName evidence="1">Unfoldase HslU</fullName>
    </alternativeName>
</protein>
<keyword id="KW-0067">ATP-binding</keyword>
<keyword id="KW-0143">Chaperone</keyword>
<keyword id="KW-0963">Cytoplasm</keyword>
<keyword id="KW-0547">Nucleotide-binding</keyword>
<keyword id="KW-0346">Stress response</keyword>
<dbReference type="EMBL" id="CP000036">
    <property type="protein sequence ID" value="ABB68399.1"/>
    <property type="molecule type" value="Genomic_DNA"/>
</dbReference>
<dbReference type="RefSeq" id="WP_001293341.1">
    <property type="nucleotide sequence ID" value="NC_007613.1"/>
</dbReference>
<dbReference type="SMR" id="Q31U59"/>
<dbReference type="GeneID" id="93777967"/>
<dbReference type="KEGG" id="sbo:SBO_3948"/>
<dbReference type="HOGENOM" id="CLU_033123_0_0_6"/>
<dbReference type="Proteomes" id="UP000007067">
    <property type="component" value="Chromosome"/>
</dbReference>
<dbReference type="GO" id="GO:0009376">
    <property type="term" value="C:HslUV protease complex"/>
    <property type="evidence" value="ECO:0007669"/>
    <property type="project" value="UniProtKB-UniRule"/>
</dbReference>
<dbReference type="GO" id="GO:0005524">
    <property type="term" value="F:ATP binding"/>
    <property type="evidence" value="ECO:0007669"/>
    <property type="project" value="UniProtKB-UniRule"/>
</dbReference>
<dbReference type="GO" id="GO:0016887">
    <property type="term" value="F:ATP hydrolysis activity"/>
    <property type="evidence" value="ECO:0007669"/>
    <property type="project" value="InterPro"/>
</dbReference>
<dbReference type="GO" id="GO:0008233">
    <property type="term" value="F:peptidase activity"/>
    <property type="evidence" value="ECO:0007669"/>
    <property type="project" value="InterPro"/>
</dbReference>
<dbReference type="GO" id="GO:0036402">
    <property type="term" value="F:proteasome-activating activity"/>
    <property type="evidence" value="ECO:0007669"/>
    <property type="project" value="UniProtKB-UniRule"/>
</dbReference>
<dbReference type="GO" id="GO:0043335">
    <property type="term" value="P:protein unfolding"/>
    <property type="evidence" value="ECO:0007669"/>
    <property type="project" value="UniProtKB-UniRule"/>
</dbReference>
<dbReference type="GO" id="GO:0051603">
    <property type="term" value="P:proteolysis involved in protein catabolic process"/>
    <property type="evidence" value="ECO:0007669"/>
    <property type="project" value="TreeGrafter"/>
</dbReference>
<dbReference type="CDD" id="cd19498">
    <property type="entry name" value="RecA-like_HslU"/>
    <property type="match status" value="1"/>
</dbReference>
<dbReference type="FunFam" id="1.10.8.10:FF:000012">
    <property type="entry name" value="ATP-dependent protease ATPase subunit HslU"/>
    <property type="match status" value="1"/>
</dbReference>
<dbReference type="FunFam" id="1.10.8.10:FF:000028">
    <property type="entry name" value="ATP-dependent protease ATPase subunit HslU"/>
    <property type="match status" value="1"/>
</dbReference>
<dbReference type="FunFam" id="1.10.8.60:FF:000027">
    <property type="entry name" value="ATP-dependent protease ATPase subunit HslU"/>
    <property type="match status" value="1"/>
</dbReference>
<dbReference type="FunFam" id="3.40.50.300:FF:000213">
    <property type="entry name" value="ATP-dependent protease ATPase subunit HslU"/>
    <property type="match status" value="1"/>
</dbReference>
<dbReference type="FunFam" id="3.40.50.300:FF:000220">
    <property type="entry name" value="ATP-dependent protease ATPase subunit HslU"/>
    <property type="match status" value="1"/>
</dbReference>
<dbReference type="Gene3D" id="1.10.8.60">
    <property type="match status" value="1"/>
</dbReference>
<dbReference type="Gene3D" id="1.10.8.10">
    <property type="entry name" value="DNA helicase RuvA subunit, C-terminal domain"/>
    <property type="match status" value="2"/>
</dbReference>
<dbReference type="Gene3D" id="3.40.50.300">
    <property type="entry name" value="P-loop containing nucleotide triphosphate hydrolases"/>
    <property type="match status" value="1"/>
</dbReference>
<dbReference type="HAMAP" id="MF_00249">
    <property type="entry name" value="HslU"/>
    <property type="match status" value="1"/>
</dbReference>
<dbReference type="InterPro" id="IPR003593">
    <property type="entry name" value="AAA+_ATPase"/>
</dbReference>
<dbReference type="InterPro" id="IPR050052">
    <property type="entry name" value="ATP-dep_Clp_protease_ClpX"/>
</dbReference>
<dbReference type="InterPro" id="IPR003959">
    <property type="entry name" value="ATPase_AAA_core"/>
</dbReference>
<dbReference type="InterPro" id="IPR019489">
    <property type="entry name" value="Clp_ATPase_C"/>
</dbReference>
<dbReference type="InterPro" id="IPR004491">
    <property type="entry name" value="HslU"/>
</dbReference>
<dbReference type="InterPro" id="IPR027417">
    <property type="entry name" value="P-loop_NTPase"/>
</dbReference>
<dbReference type="NCBIfam" id="TIGR00390">
    <property type="entry name" value="hslU"/>
    <property type="match status" value="1"/>
</dbReference>
<dbReference type="NCBIfam" id="NF003544">
    <property type="entry name" value="PRK05201.1"/>
    <property type="match status" value="1"/>
</dbReference>
<dbReference type="PANTHER" id="PTHR48102">
    <property type="entry name" value="ATP-DEPENDENT CLP PROTEASE ATP-BINDING SUBUNIT CLPX-LIKE, MITOCHONDRIAL-RELATED"/>
    <property type="match status" value="1"/>
</dbReference>
<dbReference type="PANTHER" id="PTHR48102:SF3">
    <property type="entry name" value="ATP-DEPENDENT PROTEASE ATPASE SUBUNIT HSLU"/>
    <property type="match status" value="1"/>
</dbReference>
<dbReference type="Pfam" id="PF00004">
    <property type="entry name" value="AAA"/>
    <property type="match status" value="1"/>
</dbReference>
<dbReference type="Pfam" id="PF07724">
    <property type="entry name" value="AAA_2"/>
    <property type="match status" value="1"/>
</dbReference>
<dbReference type="SMART" id="SM00382">
    <property type="entry name" value="AAA"/>
    <property type="match status" value="1"/>
</dbReference>
<dbReference type="SMART" id="SM01086">
    <property type="entry name" value="ClpB_D2-small"/>
    <property type="match status" value="1"/>
</dbReference>
<dbReference type="SUPFAM" id="SSF52540">
    <property type="entry name" value="P-loop containing nucleoside triphosphate hydrolases"/>
    <property type="match status" value="1"/>
</dbReference>
<reference key="1">
    <citation type="journal article" date="2005" name="Nucleic Acids Res.">
        <title>Genome dynamics and diversity of Shigella species, the etiologic agents of bacillary dysentery.</title>
        <authorList>
            <person name="Yang F."/>
            <person name="Yang J."/>
            <person name="Zhang X."/>
            <person name="Chen L."/>
            <person name="Jiang Y."/>
            <person name="Yan Y."/>
            <person name="Tang X."/>
            <person name="Wang J."/>
            <person name="Xiong Z."/>
            <person name="Dong J."/>
            <person name="Xue Y."/>
            <person name="Zhu Y."/>
            <person name="Xu X."/>
            <person name="Sun L."/>
            <person name="Chen S."/>
            <person name="Nie H."/>
            <person name="Peng J."/>
            <person name="Xu J."/>
            <person name="Wang Y."/>
            <person name="Yuan Z."/>
            <person name="Wen Y."/>
            <person name="Yao Z."/>
            <person name="Shen Y."/>
            <person name="Qiang B."/>
            <person name="Hou Y."/>
            <person name="Yu J."/>
            <person name="Jin Q."/>
        </authorList>
    </citation>
    <scope>NUCLEOTIDE SEQUENCE [LARGE SCALE GENOMIC DNA]</scope>
    <source>
        <strain>Sb227</strain>
    </source>
</reference>